<comment type="function">
    <text>DNA polymerase III is a complex, multichain enzyme responsible for most of the replicative synthesis in bacteria. This DNA polymerase also exhibits 3' to 5' exonuclease activity.</text>
</comment>
<comment type="catalytic activity">
    <reaction>
        <text>DNA(n) + a 2'-deoxyribonucleoside 5'-triphosphate = DNA(n+1) + diphosphate</text>
        <dbReference type="Rhea" id="RHEA:22508"/>
        <dbReference type="Rhea" id="RHEA-COMP:17339"/>
        <dbReference type="Rhea" id="RHEA-COMP:17340"/>
        <dbReference type="ChEBI" id="CHEBI:33019"/>
        <dbReference type="ChEBI" id="CHEBI:61560"/>
        <dbReference type="ChEBI" id="CHEBI:173112"/>
        <dbReference type="EC" id="2.7.7.7"/>
    </reaction>
</comment>
<comment type="subunit">
    <text evidence="1 4">Interacts with the beta sliding-clamp (dnaN) (PubMed:22545130). DNA polymerase III contains a core (composed of alpha, epsilon and theta chains) that associates with a tau subunit. This core dimerizes and associates with the clamp-loading (or gamma) complex (composed of gamma/tau, delta, delta', psi and chi subunits) and with the beta sliding clamp dimer to form the complete DNA polymerase III complex (By similarity).</text>
</comment>
<comment type="miscellaneous">
    <text>Was identified as a high-confidence drug target.</text>
</comment>
<comment type="similarity">
    <text evidence="5">Belongs to the DnaX/STICHEL family.</text>
</comment>
<accession>P9WNT9</accession>
<accession>L0TF21</accession>
<accession>O69688</accession>
<accession>P63975</accession>
<keyword id="KW-0067">ATP-binding</keyword>
<keyword id="KW-0235">DNA replication</keyword>
<keyword id="KW-0239">DNA-directed DNA polymerase</keyword>
<keyword id="KW-0479">Metal-binding</keyword>
<keyword id="KW-0547">Nucleotide-binding</keyword>
<keyword id="KW-0548">Nucleotidyltransferase</keyword>
<keyword id="KW-1185">Reference proteome</keyword>
<keyword id="KW-0808">Transferase</keyword>
<keyword id="KW-0862">Zinc</keyword>
<reference key="1">
    <citation type="journal article" date="1998" name="Nature">
        <title>Deciphering the biology of Mycobacterium tuberculosis from the complete genome sequence.</title>
        <authorList>
            <person name="Cole S.T."/>
            <person name="Brosch R."/>
            <person name="Parkhill J."/>
            <person name="Garnier T."/>
            <person name="Churcher C.M."/>
            <person name="Harris D.E."/>
            <person name="Gordon S.V."/>
            <person name="Eiglmeier K."/>
            <person name="Gas S."/>
            <person name="Barry C.E. III"/>
            <person name="Tekaia F."/>
            <person name="Badcock K."/>
            <person name="Basham D."/>
            <person name="Brown D."/>
            <person name="Chillingworth T."/>
            <person name="Connor R."/>
            <person name="Davies R.M."/>
            <person name="Devlin K."/>
            <person name="Feltwell T."/>
            <person name="Gentles S."/>
            <person name="Hamlin N."/>
            <person name="Holroyd S."/>
            <person name="Hornsby T."/>
            <person name="Jagels K."/>
            <person name="Krogh A."/>
            <person name="McLean J."/>
            <person name="Moule S."/>
            <person name="Murphy L.D."/>
            <person name="Oliver S."/>
            <person name="Osborne J."/>
            <person name="Quail M.A."/>
            <person name="Rajandream M.A."/>
            <person name="Rogers J."/>
            <person name="Rutter S."/>
            <person name="Seeger K."/>
            <person name="Skelton S."/>
            <person name="Squares S."/>
            <person name="Squares R."/>
            <person name="Sulston J.E."/>
            <person name="Taylor K."/>
            <person name="Whitehead S."/>
            <person name="Barrell B.G."/>
        </authorList>
    </citation>
    <scope>NUCLEOTIDE SEQUENCE [LARGE SCALE GENOMIC DNA]</scope>
    <source>
        <strain>ATCC 25618 / H37Rv</strain>
    </source>
</reference>
<reference key="2">
    <citation type="journal article" date="2008" name="BMC Syst. Biol.">
        <title>targetTB: a target identification pipeline for Mycobacterium tuberculosis through an interactome, reactome and genome-scale structural analysis.</title>
        <authorList>
            <person name="Raman K."/>
            <person name="Yeturu K."/>
            <person name="Chandra N."/>
        </authorList>
    </citation>
    <scope>IDENTIFICATION AS A DRUG TARGET [LARGE SCALE ANALYSIS]</scope>
</reference>
<reference key="3">
    <citation type="journal article" date="2011" name="Mol. Cell. Proteomics">
        <title>Proteogenomic analysis of Mycobacterium tuberculosis by high resolution mass spectrometry.</title>
        <authorList>
            <person name="Kelkar D.S."/>
            <person name="Kumar D."/>
            <person name="Kumar P."/>
            <person name="Balakrishnan L."/>
            <person name="Muthusamy B."/>
            <person name="Yadav A.K."/>
            <person name="Shrivastava P."/>
            <person name="Marimuthu A."/>
            <person name="Anand S."/>
            <person name="Sundaram H."/>
            <person name="Kingsbury R."/>
            <person name="Harsha H.C."/>
            <person name="Nair B."/>
            <person name="Prasad T.S."/>
            <person name="Chauhan D.S."/>
            <person name="Katoch K."/>
            <person name="Katoch V.M."/>
            <person name="Kumar P."/>
            <person name="Chaerkady R."/>
            <person name="Ramachandran S."/>
            <person name="Dash D."/>
            <person name="Pandey A."/>
        </authorList>
    </citation>
    <scope>IDENTIFICATION BY MASS SPECTROMETRY [LARGE SCALE ANALYSIS]</scope>
    <source>
        <strain>ATCC 25618 / H37Rv</strain>
    </source>
</reference>
<reference key="4">
    <citation type="journal article" date="2012" name="PLoS ONE">
        <title>M. tuberculosis sliding beta-clamp does not interact directly with the NAD+-dependent DNA ligase.</title>
        <authorList>
            <person name="Kukshal V."/>
            <person name="Khanam T."/>
            <person name="Chopra D."/>
            <person name="Singh N."/>
            <person name="Sanyal S."/>
            <person name="Ramachandran R."/>
        </authorList>
    </citation>
    <scope>INTERACTION WITH DNAN</scope>
    <scope>SUBUNIT</scope>
    <scope>DNA-BINDING</scope>
    <source>
        <strain>H37Rv</strain>
    </source>
</reference>
<feature type="chain" id="PRO_0000105500" description="DNA polymerase III subunit gamma/tau">
    <location>
        <begin position="1"/>
        <end position="578"/>
    </location>
</feature>
<feature type="region of interest" description="Disordered" evidence="3">
    <location>
        <begin position="389"/>
        <end position="423"/>
    </location>
</feature>
<feature type="region of interest" description="Disordered" evidence="3">
    <location>
        <begin position="525"/>
        <end position="559"/>
    </location>
</feature>
<feature type="compositionally biased region" description="Basic and acidic residues" evidence="3">
    <location>
        <begin position="402"/>
        <end position="412"/>
    </location>
</feature>
<feature type="compositionally biased region" description="Basic and acidic residues" evidence="3">
    <location>
        <begin position="536"/>
        <end position="559"/>
    </location>
</feature>
<feature type="binding site" evidence="2">
    <location>
        <begin position="42"/>
        <end position="49"/>
    </location>
    <ligand>
        <name>ATP</name>
        <dbReference type="ChEBI" id="CHEBI:30616"/>
    </ligand>
</feature>
<feature type="binding site" evidence="1">
    <location>
        <position position="61"/>
    </location>
    <ligand>
        <name>Zn(2+)</name>
        <dbReference type="ChEBI" id="CHEBI:29105"/>
    </ligand>
</feature>
<feature type="binding site" evidence="1">
    <location>
        <position position="70"/>
    </location>
    <ligand>
        <name>Zn(2+)</name>
        <dbReference type="ChEBI" id="CHEBI:29105"/>
    </ligand>
</feature>
<feature type="binding site" evidence="1">
    <location>
        <position position="73"/>
    </location>
    <ligand>
        <name>Zn(2+)</name>
        <dbReference type="ChEBI" id="CHEBI:29105"/>
    </ligand>
</feature>
<feature type="binding site" evidence="1">
    <location>
        <position position="76"/>
    </location>
    <ligand>
        <name>Zn(2+)</name>
        <dbReference type="ChEBI" id="CHEBI:29105"/>
    </ligand>
</feature>
<proteinExistence type="evidence at protein level"/>
<name>DPO3X_MYCTU</name>
<gene>
    <name type="primary">dnaX</name>
    <name type="synonym">dnaZX</name>
    <name type="ordered locus">Rv3721c</name>
    <name type="ORF">MTV025.069c</name>
</gene>
<dbReference type="EC" id="2.7.7.7"/>
<dbReference type="EMBL" id="AL123456">
    <property type="protein sequence ID" value="CCP46547.1"/>
    <property type="molecule type" value="Genomic_DNA"/>
</dbReference>
<dbReference type="PIR" id="B70796">
    <property type="entry name" value="B70796"/>
</dbReference>
<dbReference type="RefSeq" id="NP_218238.1">
    <property type="nucleotide sequence ID" value="NC_000962.3"/>
</dbReference>
<dbReference type="RefSeq" id="WP_003420417.1">
    <property type="nucleotide sequence ID" value="NZ_NVQJ01000009.1"/>
</dbReference>
<dbReference type="SMR" id="P9WNT9"/>
<dbReference type="FunCoup" id="P9WNT9">
    <property type="interactions" value="158"/>
</dbReference>
<dbReference type="STRING" id="83332.Rv3721c"/>
<dbReference type="PaxDb" id="83332-Rv3721c"/>
<dbReference type="DNASU" id="885361"/>
<dbReference type="GeneID" id="885361"/>
<dbReference type="KEGG" id="mtu:Rv3721c"/>
<dbReference type="KEGG" id="mtv:RVBD_3721c"/>
<dbReference type="TubercuList" id="Rv3721c"/>
<dbReference type="eggNOG" id="COG2812">
    <property type="taxonomic scope" value="Bacteria"/>
</dbReference>
<dbReference type="InParanoid" id="P9WNT9"/>
<dbReference type="OrthoDB" id="9810148at2"/>
<dbReference type="PhylomeDB" id="P9WNT9"/>
<dbReference type="Proteomes" id="UP000001584">
    <property type="component" value="Chromosome"/>
</dbReference>
<dbReference type="GO" id="GO:0009360">
    <property type="term" value="C:DNA polymerase III complex"/>
    <property type="evidence" value="ECO:0007669"/>
    <property type="project" value="InterPro"/>
</dbReference>
<dbReference type="GO" id="GO:0005524">
    <property type="term" value="F:ATP binding"/>
    <property type="evidence" value="ECO:0007669"/>
    <property type="project" value="UniProtKB-KW"/>
</dbReference>
<dbReference type="GO" id="GO:0016887">
    <property type="term" value="F:ATP hydrolysis activity"/>
    <property type="evidence" value="ECO:0007669"/>
    <property type="project" value="InterPro"/>
</dbReference>
<dbReference type="GO" id="GO:0003677">
    <property type="term" value="F:DNA binding"/>
    <property type="evidence" value="ECO:0007669"/>
    <property type="project" value="InterPro"/>
</dbReference>
<dbReference type="GO" id="GO:0003887">
    <property type="term" value="F:DNA-directed DNA polymerase activity"/>
    <property type="evidence" value="ECO:0007669"/>
    <property type="project" value="UniProtKB-KW"/>
</dbReference>
<dbReference type="GO" id="GO:0046872">
    <property type="term" value="F:metal ion binding"/>
    <property type="evidence" value="ECO:0007669"/>
    <property type="project" value="UniProtKB-KW"/>
</dbReference>
<dbReference type="GO" id="GO:0006261">
    <property type="term" value="P:DNA-templated DNA replication"/>
    <property type="evidence" value="ECO:0000318"/>
    <property type="project" value="GO_Central"/>
</dbReference>
<dbReference type="CDD" id="cd00009">
    <property type="entry name" value="AAA"/>
    <property type="match status" value="1"/>
</dbReference>
<dbReference type="CDD" id="cd18137">
    <property type="entry name" value="HLD_clamp_pol_III_gamma_tau"/>
    <property type="match status" value="1"/>
</dbReference>
<dbReference type="FunFam" id="1.20.272.10:FF:000003">
    <property type="entry name" value="DNA polymerase III subunit gamma/tau"/>
    <property type="match status" value="1"/>
</dbReference>
<dbReference type="FunFam" id="3.40.50.300:FF:000014">
    <property type="entry name" value="DNA polymerase III subunit gamma/tau"/>
    <property type="match status" value="1"/>
</dbReference>
<dbReference type="Gene3D" id="1.10.8.60">
    <property type="match status" value="1"/>
</dbReference>
<dbReference type="Gene3D" id="1.20.272.10">
    <property type="match status" value="1"/>
</dbReference>
<dbReference type="Gene3D" id="3.40.50.300">
    <property type="entry name" value="P-loop containing nucleotide triphosphate hydrolases"/>
    <property type="match status" value="1"/>
</dbReference>
<dbReference type="InterPro" id="IPR003593">
    <property type="entry name" value="AAA+_ATPase"/>
</dbReference>
<dbReference type="InterPro" id="IPR008921">
    <property type="entry name" value="DNA_pol3_clamp-load_cplx_C"/>
</dbReference>
<dbReference type="InterPro" id="IPR022754">
    <property type="entry name" value="DNA_pol_III_gamma-3"/>
</dbReference>
<dbReference type="InterPro" id="IPR012763">
    <property type="entry name" value="DNA_pol_III_sug/sutau_N"/>
</dbReference>
<dbReference type="InterPro" id="IPR050238">
    <property type="entry name" value="DNA_Rep/Repair_Clamp_Loader"/>
</dbReference>
<dbReference type="InterPro" id="IPR045085">
    <property type="entry name" value="HLD_clamp_pol_III_gamma_tau"/>
</dbReference>
<dbReference type="InterPro" id="IPR027417">
    <property type="entry name" value="P-loop_NTPase"/>
</dbReference>
<dbReference type="NCBIfam" id="TIGR02397">
    <property type="entry name" value="dnaX_nterm"/>
    <property type="match status" value="1"/>
</dbReference>
<dbReference type="NCBIfam" id="NF005846">
    <property type="entry name" value="PRK07764.1-6"/>
    <property type="match status" value="1"/>
</dbReference>
<dbReference type="NCBIfam" id="NF011513">
    <property type="entry name" value="PRK14952.1"/>
    <property type="match status" value="1"/>
</dbReference>
<dbReference type="PANTHER" id="PTHR11669:SF0">
    <property type="entry name" value="PROTEIN STICHEL-LIKE 2"/>
    <property type="match status" value="1"/>
</dbReference>
<dbReference type="PANTHER" id="PTHR11669">
    <property type="entry name" value="REPLICATION FACTOR C / DNA POLYMERASE III GAMMA-TAU SUBUNIT"/>
    <property type="match status" value="1"/>
</dbReference>
<dbReference type="Pfam" id="PF13177">
    <property type="entry name" value="DNA_pol3_delta2"/>
    <property type="match status" value="1"/>
</dbReference>
<dbReference type="Pfam" id="PF12169">
    <property type="entry name" value="DNA_pol3_gamma3"/>
    <property type="match status" value="1"/>
</dbReference>
<dbReference type="Pfam" id="PF22608">
    <property type="entry name" value="DNAX_ATPase_lid"/>
    <property type="match status" value="1"/>
</dbReference>
<dbReference type="SMART" id="SM00382">
    <property type="entry name" value="AAA"/>
    <property type="match status" value="1"/>
</dbReference>
<dbReference type="SUPFAM" id="SSF52540">
    <property type="entry name" value="P-loop containing nucleoside triphosphate hydrolases"/>
    <property type="match status" value="1"/>
</dbReference>
<dbReference type="SUPFAM" id="SSF48019">
    <property type="entry name" value="post-AAA+ oligomerization domain-like"/>
    <property type="match status" value="1"/>
</dbReference>
<organism>
    <name type="scientific">Mycobacterium tuberculosis (strain ATCC 25618 / H37Rv)</name>
    <dbReference type="NCBI Taxonomy" id="83332"/>
    <lineage>
        <taxon>Bacteria</taxon>
        <taxon>Bacillati</taxon>
        <taxon>Actinomycetota</taxon>
        <taxon>Actinomycetes</taxon>
        <taxon>Mycobacteriales</taxon>
        <taxon>Mycobacteriaceae</taxon>
        <taxon>Mycobacterium</taxon>
        <taxon>Mycobacterium tuberculosis complex</taxon>
    </lineage>
</organism>
<evidence type="ECO:0000250" key="1">
    <source>
        <dbReference type="UniProtKB" id="P06710"/>
    </source>
</evidence>
<evidence type="ECO:0000255" key="2"/>
<evidence type="ECO:0000256" key="3">
    <source>
        <dbReference type="SAM" id="MobiDB-lite"/>
    </source>
</evidence>
<evidence type="ECO:0000269" key="4">
    <source>
    </source>
</evidence>
<evidence type="ECO:0000305" key="5"/>
<sequence length="578" mass="61923">MALYRKYRPASFAEVVGQEHVTAPLSVALDAGRINHAYLFSGPRGCGKTSSARILARSLNCAQGPTANPCGVCESCVSLAPNAPGSIDVVELDAASHGGVDDTRELRDRAFYAPVQSRYRVFIVDEAHMVTTAGFNALLKIVEEPPEHLIFIFATTEPEKVLPTIRSRTHHYPFRLLPPRTMRALLARICEQEGVVVDDAVYPLVIRAGGGSPRDTLSVLDQLLAGAADTHVTYTRALGLLGVTDVALIDDAVDALAACDAAALFGAIESVIDGGHDPRRFATDLLERFRDLIVLQSVPDAASRGVVDAPEDALDRMREQAARIGRATLTRYAEVVQAGLGEMRGATAPRLLLEVVCARLLLPSASDAESALLQRVERIETRLDMSIPAPQAVPRPSAAAAEPKHQPAREPRPVLAPTPASSEPTVAAVRSMWPTVRDKVRLRSRTTEVMLAGATVRALEDNTLVLTHESAPLARRLSEQRNADVLAEALKDALGVNWRVRCETGEPAAAASPVGGGANVATAKAVNPAPTANSTQRDEEEHMLAEAGRGDPSPRRDPEEVALELLQNELGARRIDNA</sequence>
<protein>
    <recommendedName>
        <fullName>DNA polymerase III subunit gamma/tau</fullName>
        <ecNumber>2.7.7.7</ecNumber>
    </recommendedName>
</protein>